<comment type="function">
    <text evidence="1">Part of a heterotetrameric complex that catalyzes the two-step biosynthesis of anthranilate, an intermediate in the biosynthesis of L-tryptophan. In the first step, the glutamine-binding beta subunit (TrpG) of anthranilate synthase (AS) provides the glutamine amidotransferase activity which generates ammonia as a substrate that, along with chorismate, is used in the second step, catalyzed by the large alpha subunit of AS (TrpE) to produce anthranilate. In the absence of TrpG, TrpE can synthesize anthranilate directly from chorismate and high concentrations of ammonia (By similarity).</text>
</comment>
<comment type="catalytic activity">
    <reaction>
        <text>chorismate + L-glutamine = anthranilate + pyruvate + L-glutamate + H(+)</text>
        <dbReference type="Rhea" id="RHEA:21732"/>
        <dbReference type="ChEBI" id="CHEBI:15361"/>
        <dbReference type="ChEBI" id="CHEBI:15378"/>
        <dbReference type="ChEBI" id="CHEBI:16567"/>
        <dbReference type="ChEBI" id="CHEBI:29748"/>
        <dbReference type="ChEBI" id="CHEBI:29985"/>
        <dbReference type="ChEBI" id="CHEBI:58359"/>
        <dbReference type="EC" id="4.1.3.27"/>
    </reaction>
</comment>
<comment type="pathway">
    <text>Amino-acid biosynthesis; L-tryptophan biosynthesis; L-tryptophan from chorismate: step 1/5.</text>
</comment>
<comment type="subunit">
    <text evidence="1">Heterotetramer consisting of two non-identical subunits: a beta subunit (TrpG) and a large alpha subunit (TrpE).</text>
</comment>
<sequence length="197" mass="22061">MEVKKVLVIDNIDSFVWNLVQYVGTLGYKVKLVDNKITLDEIKKINPDRIIISPGPKTPKEAGNCIKIIQEVDIPILGVCLGHQCIVEAFGGEVGRAKRVMHGKASLINHDGEGIFKDIPNPFYGGRYHSLIAKEVPKELKITAKSLDDNYIMGVRHKKLPIEGVQFHPESILTESDNLKFPDLGLKLIKNFVESEY</sequence>
<protein>
    <recommendedName>
        <fullName>Anthranilate synthase component 2</fullName>
        <shortName>AS</shortName>
        <shortName>ASII</shortName>
        <ecNumber>4.1.3.27</ecNumber>
    </recommendedName>
    <alternativeName>
        <fullName>Anthranilate synthase, GATase component</fullName>
    </alternativeName>
    <alternativeName>
        <fullName>Anthranilate synthase, glutamine amidotransferase component</fullName>
    </alternativeName>
</protein>
<keyword id="KW-0028">Amino-acid biosynthesis</keyword>
<keyword id="KW-0057">Aromatic amino acid biosynthesis</keyword>
<keyword id="KW-0315">Glutamine amidotransferase</keyword>
<keyword id="KW-0456">Lyase</keyword>
<keyword id="KW-1185">Reference proteome</keyword>
<keyword id="KW-0822">Tryptophan biosynthesis</keyword>
<proteinExistence type="inferred from homology"/>
<gene>
    <name type="primary">trpG</name>
    <name type="ordered locus">MJ0238</name>
</gene>
<evidence type="ECO:0000250" key="1"/>
<evidence type="ECO:0000250" key="2">
    <source>
        <dbReference type="UniProtKB" id="P00900"/>
    </source>
</evidence>
<evidence type="ECO:0000255" key="3">
    <source>
        <dbReference type="PROSITE-ProRule" id="PRU00605"/>
    </source>
</evidence>
<feature type="chain" id="PRO_0000056888" description="Anthranilate synthase component 2">
    <location>
        <begin position="1"/>
        <end position="197"/>
    </location>
</feature>
<feature type="domain" description="Glutamine amidotransferase type-1" evidence="3">
    <location>
        <begin position="5"/>
        <end position="197"/>
    </location>
</feature>
<feature type="active site" description="Nucleophile; for GATase activity" evidence="3">
    <location>
        <position position="80"/>
    </location>
</feature>
<feature type="active site" description="For GATase activity" evidence="3">
    <location>
        <position position="168"/>
    </location>
</feature>
<feature type="active site" description="For GATase activity" evidence="3">
    <location>
        <position position="170"/>
    </location>
</feature>
<feature type="binding site" evidence="2">
    <location>
        <begin position="55"/>
        <end position="57"/>
    </location>
    <ligand>
        <name>L-glutamine</name>
        <dbReference type="ChEBI" id="CHEBI:58359"/>
    </ligand>
</feature>
<feature type="binding site" evidence="2">
    <location>
        <position position="84"/>
    </location>
    <ligand>
        <name>L-glutamine</name>
        <dbReference type="ChEBI" id="CHEBI:58359"/>
    </ligand>
</feature>
<feature type="binding site" evidence="2">
    <location>
        <begin position="130"/>
        <end position="131"/>
    </location>
    <ligand>
        <name>L-glutamine</name>
        <dbReference type="ChEBI" id="CHEBI:58359"/>
    </ligand>
</feature>
<reference key="1">
    <citation type="journal article" date="1996" name="Science">
        <title>Complete genome sequence of the methanogenic archaeon, Methanococcus jannaschii.</title>
        <authorList>
            <person name="Bult C.J."/>
            <person name="White O."/>
            <person name="Olsen G.J."/>
            <person name="Zhou L."/>
            <person name="Fleischmann R.D."/>
            <person name="Sutton G.G."/>
            <person name="Blake J.A."/>
            <person name="FitzGerald L.M."/>
            <person name="Clayton R.A."/>
            <person name="Gocayne J.D."/>
            <person name="Kerlavage A.R."/>
            <person name="Dougherty B.A."/>
            <person name="Tomb J.-F."/>
            <person name="Adams M.D."/>
            <person name="Reich C.I."/>
            <person name="Overbeek R."/>
            <person name="Kirkness E.F."/>
            <person name="Weinstock K.G."/>
            <person name="Merrick J.M."/>
            <person name="Glodek A."/>
            <person name="Scott J.L."/>
            <person name="Geoghagen N.S.M."/>
            <person name="Weidman J.F."/>
            <person name="Fuhrmann J.L."/>
            <person name="Nguyen D."/>
            <person name="Utterback T.R."/>
            <person name="Kelley J.M."/>
            <person name="Peterson J.D."/>
            <person name="Sadow P.W."/>
            <person name="Hanna M.C."/>
            <person name="Cotton M.D."/>
            <person name="Roberts K.M."/>
            <person name="Hurst M.A."/>
            <person name="Kaine B.P."/>
            <person name="Borodovsky M."/>
            <person name="Klenk H.-P."/>
            <person name="Fraser C.M."/>
            <person name="Smith H.O."/>
            <person name="Woese C.R."/>
            <person name="Venter J.C."/>
        </authorList>
    </citation>
    <scope>NUCLEOTIDE SEQUENCE [LARGE SCALE GENOMIC DNA]</scope>
    <source>
        <strain>ATCC 43067 / DSM 2661 / JAL-1 / JCM 10045 / NBRC 100440</strain>
    </source>
</reference>
<name>TRPG_METJA</name>
<accession>Q57690</accession>
<dbReference type="EC" id="4.1.3.27"/>
<dbReference type="EMBL" id="L77117">
    <property type="protein sequence ID" value="AAB98224.1"/>
    <property type="molecule type" value="Genomic_DNA"/>
</dbReference>
<dbReference type="PIR" id="G64329">
    <property type="entry name" value="G64329"/>
</dbReference>
<dbReference type="RefSeq" id="WP_010869736.1">
    <property type="nucleotide sequence ID" value="NC_000909.1"/>
</dbReference>
<dbReference type="SMR" id="Q57690"/>
<dbReference type="FunCoup" id="Q57690">
    <property type="interactions" value="113"/>
</dbReference>
<dbReference type="STRING" id="243232.MJ_0238"/>
<dbReference type="MEROPS" id="C26.959"/>
<dbReference type="PaxDb" id="243232-MJ_0238"/>
<dbReference type="EnsemblBacteria" id="AAB98224">
    <property type="protein sequence ID" value="AAB98224"/>
    <property type="gene ID" value="MJ_0238"/>
</dbReference>
<dbReference type="GeneID" id="1451092"/>
<dbReference type="KEGG" id="mja:MJ_0238"/>
<dbReference type="eggNOG" id="arCOG00086">
    <property type="taxonomic scope" value="Archaea"/>
</dbReference>
<dbReference type="HOGENOM" id="CLU_014340_1_2_2"/>
<dbReference type="InParanoid" id="Q57690"/>
<dbReference type="OrthoDB" id="3321at2157"/>
<dbReference type="PhylomeDB" id="Q57690"/>
<dbReference type="UniPathway" id="UPA00035">
    <property type="reaction ID" value="UER00040"/>
</dbReference>
<dbReference type="Proteomes" id="UP000000805">
    <property type="component" value="Chromosome"/>
</dbReference>
<dbReference type="GO" id="GO:0004049">
    <property type="term" value="F:anthranilate synthase activity"/>
    <property type="evidence" value="ECO:0007669"/>
    <property type="project" value="UniProtKB-EC"/>
</dbReference>
<dbReference type="GO" id="GO:0000162">
    <property type="term" value="P:L-tryptophan biosynthetic process"/>
    <property type="evidence" value="ECO:0000318"/>
    <property type="project" value="GO_Central"/>
</dbReference>
<dbReference type="CDD" id="cd01743">
    <property type="entry name" value="GATase1_Anthranilate_Synthase"/>
    <property type="match status" value="1"/>
</dbReference>
<dbReference type="FunFam" id="3.40.50.880:FF:000003">
    <property type="entry name" value="Anthranilate synthase component II"/>
    <property type="match status" value="1"/>
</dbReference>
<dbReference type="Gene3D" id="3.40.50.880">
    <property type="match status" value="1"/>
</dbReference>
<dbReference type="InterPro" id="IPR050472">
    <property type="entry name" value="Anth_synth/Amidotransfase"/>
</dbReference>
<dbReference type="InterPro" id="IPR029062">
    <property type="entry name" value="Class_I_gatase-like"/>
</dbReference>
<dbReference type="InterPro" id="IPR017926">
    <property type="entry name" value="GATASE"/>
</dbReference>
<dbReference type="InterPro" id="IPR006221">
    <property type="entry name" value="TrpG/PapA_dom"/>
</dbReference>
<dbReference type="NCBIfam" id="TIGR00566">
    <property type="entry name" value="trpG_papA"/>
    <property type="match status" value="1"/>
</dbReference>
<dbReference type="PANTHER" id="PTHR43418:SF4">
    <property type="entry name" value="MULTIFUNCTIONAL TRYPTOPHAN BIOSYNTHESIS PROTEIN"/>
    <property type="match status" value="1"/>
</dbReference>
<dbReference type="PANTHER" id="PTHR43418">
    <property type="entry name" value="MULTIFUNCTIONAL TRYPTOPHAN BIOSYNTHESIS PROTEIN-RELATED"/>
    <property type="match status" value="1"/>
</dbReference>
<dbReference type="Pfam" id="PF00117">
    <property type="entry name" value="GATase"/>
    <property type="match status" value="1"/>
</dbReference>
<dbReference type="PRINTS" id="PR00097">
    <property type="entry name" value="ANTSNTHASEII"/>
</dbReference>
<dbReference type="PRINTS" id="PR00096">
    <property type="entry name" value="GATASE"/>
</dbReference>
<dbReference type="SUPFAM" id="SSF52317">
    <property type="entry name" value="Class I glutamine amidotransferase-like"/>
    <property type="match status" value="1"/>
</dbReference>
<dbReference type="PROSITE" id="PS51273">
    <property type="entry name" value="GATASE_TYPE_1"/>
    <property type="match status" value="1"/>
</dbReference>
<organism>
    <name type="scientific">Methanocaldococcus jannaschii (strain ATCC 43067 / DSM 2661 / JAL-1 / JCM 10045 / NBRC 100440)</name>
    <name type="common">Methanococcus jannaschii</name>
    <dbReference type="NCBI Taxonomy" id="243232"/>
    <lineage>
        <taxon>Archaea</taxon>
        <taxon>Methanobacteriati</taxon>
        <taxon>Methanobacteriota</taxon>
        <taxon>Methanomada group</taxon>
        <taxon>Methanococci</taxon>
        <taxon>Methanococcales</taxon>
        <taxon>Methanocaldococcaceae</taxon>
        <taxon>Methanocaldococcus</taxon>
    </lineage>
</organism>